<accession>Q03K83</accession>
<protein>
    <recommendedName>
        <fullName evidence="1">Phosphoribosyl-AMP cyclohydrolase</fullName>
        <shortName evidence="1">PRA-CH</shortName>
        <ecNumber evidence="1">3.5.4.19</ecNumber>
    </recommendedName>
</protein>
<sequence>MTEVKLDFDKQGGLVPVIVTDYKTGQVLMLAYMNEVSYQLTLETKQMHYWSRSRNELWHKGATSGHFQHVKSIKTDCDWDTLLIAVEQEGAACHTGAYSCFFTDIYDDNQDR</sequence>
<dbReference type="EC" id="3.5.4.19" evidence="1"/>
<dbReference type="EMBL" id="CP000419">
    <property type="protein sequence ID" value="ABJ66389.1"/>
    <property type="molecule type" value="Genomic_DNA"/>
</dbReference>
<dbReference type="RefSeq" id="WP_011681264.1">
    <property type="nucleotide sequence ID" value="NC_008532.1"/>
</dbReference>
<dbReference type="SMR" id="Q03K83"/>
<dbReference type="KEGG" id="ste:STER_1199"/>
<dbReference type="HOGENOM" id="CLU_048577_5_3_9"/>
<dbReference type="UniPathway" id="UPA00031">
    <property type="reaction ID" value="UER00008"/>
</dbReference>
<dbReference type="GO" id="GO:0005737">
    <property type="term" value="C:cytoplasm"/>
    <property type="evidence" value="ECO:0007669"/>
    <property type="project" value="UniProtKB-SubCell"/>
</dbReference>
<dbReference type="GO" id="GO:0000287">
    <property type="term" value="F:magnesium ion binding"/>
    <property type="evidence" value="ECO:0007669"/>
    <property type="project" value="UniProtKB-UniRule"/>
</dbReference>
<dbReference type="GO" id="GO:0004635">
    <property type="term" value="F:phosphoribosyl-AMP cyclohydrolase activity"/>
    <property type="evidence" value="ECO:0007669"/>
    <property type="project" value="UniProtKB-UniRule"/>
</dbReference>
<dbReference type="GO" id="GO:0008270">
    <property type="term" value="F:zinc ion binding"/>
    <property type="evidence" value="ECO:0007669"/>
    <property type="project" value="UniProtKB-UniRule"/>
</dbReference>
<dbReference type="GO" id="GO:0000105">
    <property type="term" value="P:L-histidine biosynthetic process"/>
    <property type="evidence" value="ECO:0007669"/>
    <property type="project" value="UniProtKB-UniRule"/>
</dbReference>
<dbReference type="FunFam" id="3.10.20.810:FF:000001">
    <property type="entry name" value="Histidine biosynthesis bifunctional protein HisIE"/>
    <property type="match status" value="1"/>
</dbReference>
<dbReference type="Gene3D" id="3.10.20.810">
    <property type="entry name" value="Phosphoribosyl-AMP cyclohydrolase"/>
    <property type="match status" value="1"/>
</dbReference>
<dbReference type="HAMAP" id="MF_01021">
    <property type="entry name" value="HisI"/>
    <property type="match status" value="1"/>
</dbReference>
<dbReference type="InterPro" id="IPR026660">
    <property type="entry name" value="PRA-CH"/>
</dbReference>
<dbReference type="InterPro" id="IPR002496">
    <property type="entry name" value="PRib_AMP_CycHydrolase_dom"/>
</dbReference>
<dbReference type="InterPro" id="IPR038019">
    <property type="entry name" value="PRib_AMP_CycHydrolase_sf"/>
</dbReference>
<dbReference type="NCBIfam" id="NF000768">
    <property type="entry name" value="PRK00051.1"/>
    <property type="match status" value="1"/>
</dbReference>
<dbReference type="PANTHER" id="PTHR42945">
    <property type="entry name" value="HISTIDINE BIOSYNTHESIS BIFUNCTIONAL PROTEIN"/>
    <property type="match status" value="1"/>
</dbReference>
<dbReference type="PANTHER" id="PTHR42945:SF1">
    <property type="entry name" value="HISTIDINE BIOSYNTHESIS BIFUNCTIONAL PROTEIN HIS7"/>
    <property type="match status" value="1"/>
</dbReference>
<dbReference type="Pfam" id="PF01502">
    <property type="entry name" value="PRA-CH"/>
    <property type="match status" value="1"/>
</dbReference>
<dbReference type="SUPFAM" id="SSF141734">
    <property type="entry name" value="HisI-like"/>
    <property type="match status" value="1"/>
</dbReference>
<feature type="chain" id="PRO_1000063438" description="Phosphoribosyl-AMP cyclohydrolase">
    <location>
        <begin position="1"/>
        <end position="112"/>
    </location>
</feature>
<feature type="binding site" evidence="1">
    <location>
        <position position="76"/>
    </location>
    <ligand>
        <name>Mg(2+)</name>
        <dbReference type="ChEBI" id="CHEBI:18420"/>
    </ligand>
</feature>
<feature type="binding site" evidence="1">
    <location>
        <position position="77"/>
    </location>
    <ligand>
        <name>Zn(2+)</name>
        <dbReference type="ChEBI" id="CHEBI:29105"/>
        <note>ligand shared between dimeric partners</note>
    </ligand>
</feature>
<feature type="binding site" evidence="1">
    <location>
        <position position="78"/>
    </location>
    <ligand>
        <name>Mg(2+)</name>
        <dbReference type="ChEBI" id="CHEBI:18420"/>
    </ligand>
</feature>
<feature type="binding site" evidence="1">
    <location>
        <position position="80"/>
    </location>
    <ligand>
        <name>Mg(2+)</name>
        <dbReference type="ChEBI" id="CHEBI:18420"/>
    </ligand>
</feature>
<feature type="binding site" evidence="1">
    <location>
        <position position="93"/>
    </location>
    <ligand>
        <name>Zn(2+)</name>
        <dbReference type="ChEBI" id="CHEBI:29105"/>
        <note>ligand shared between dimeric partners</note>
    </ligand>
</feature>
<feature type="binding site" evidence="1">
    <location>
        <position position="100"/>
    </location>
    <ligand>
        <name>Zn(2+)</name>
        <dbReference type="ChEBI" id="CHEBI:29105"/>
        <note>ligand shared between dimeric partners</note>
    </ligand>
</feature>
<proteinExistence type="inferred from homology"/>
<name>HIS3_STRTD</name>
<evidence type="ECO:0000255" key="1">
    <source>
        <dbReference type="HAMAP-Rule" id="MF_01021"/>
    </source>
</evidence>
<keyword id="KW-0028">Amino-acid biosynthesis</keyword>
<keyword id="KW-0963">Cytoplasm</keyword>
<keyword id="KW-0368">Histidine biosynthesis</keyword>
<keyword id="KW-0378">Hydrolase</keyword>
<keyword id="KW-0460">Magnesium</keyword>
<keyword id="KW-0479">Metal-binding</keyword>
<keyword id="KW-0862">Zinc</keyword>
<reference key="1">
    <citation type="journal article" date="2006" name="Proc. Natl. Acad. Sci. U.S.A.">
        <title>Comparative genomics of the lactic acid bacteria.</title>
        <authorList>
            <person name="Makarova K.S."/>
            <person name="Slesarev A."/>
            <person name="Wolf Y.I."/>
            <person name="Sorokin A."/>
            <person name="Mirkin B."/>
            <person name="Koonin E.V."/>
            <person name="Pavlov A."/>
            <person name="Pavlova N."/>
            <person name="Karamychev V."/>
            <person name="Polouchine N."/>
            <person name="Shakhova V."/>
            <person name="Grigoriev I."/>
            <person name="Lou Y."/>
            <person name="Rohksar D."/>
            <person name="Lucas S."/>
            <person name="Huang K."/>
            <person name="Goodstein D.M."/>
            <person name="Hawkins T."/>
            <person name="Plengvidhya V."/>
            <person name="Welker D."/>
            <person name="Hughes J."/>
            <person name="Goh Y."/>
            <person name="Benson A."/>
            <person name="Baldwin K."/>
            <person name="Lee J.-H."/>
            <person name="Diaz-Muniz I."/>
            <person name="Dosti B."/>
            <person name="Smeianov V."/>
            <person name="Wechter W."/>
            <person name="Barabote R."/>
            <person name="Lorca G."/>
            <person name="Altermann E."/>
            <person name="Barrangou R."/>
            <person name="Ganesan B."/>
            <person name="Xie Y."/>
            <person name="Rawsthorne H."/>
            <person name="Tamir D."/>
            <person name="Parker C."/>
            <person name="Breidt F."/>
            <person name="Broadbent J.R."/>
            <person name="Hutkins R."/>
            <person name="O'Sullivan D."/>
            <person name="Steele J."/>
            <person name="Unlu G."/>
            <person name="Saier M.H. Jr."/>
            <person name="Klaenhammer T."/>
            <person name="Richardson P."/>
            <person name="Kozyavkin S."/>
            <person name="Weimer B.C."/>
            <person name="Mills D.A."/>
        </authorList>
    </citation>
    <scope>NUCLEOTIDE SEQUENCE [LARGE SCALE GENOMIC DNA]</scope>
    <source>
        <strain>ATCC BAA-491 / LMD-9</strain>
    </source>
</reference>
<comment type="function">
    <text evidence="1">Catalyzes the hydrolysis of the adenine ring of phosphoribosyl-AMP.</text>
</comment>
<comment type="catalytic activity">
    <reaction evidence="1">
        <text>1-(5-phospho-beta-D-ribosyl)-5'-AMP + H2O = 1-(5-phospho-beta-D-ribosyl)-5-[(5-phospho-beta-D-ribosylamino)methylideneamino]imidazole-4-carboxamide</text>
        <dbReference type="Rhea" id="RHEA:20049"/>
        <dbReference type="ChEBI" id="CHEBI:15377"/>
        <dbReference type="ChEBI" id="CHEBI:58435"/>
        <dbReference type="ChEBI" id="CHEBI:59457"/>
        <dbReference type="EC" id="3.5.4.19"/>
    </reaction>
</comment>
<comment type="cofactor">
    <cofactor evidence="1">
        <name>Mg(2+)</name>
        <dbReference type="ChEBI" id="CHEBI:18420"/>
    </cofactor>
    <text evidence="1">Binds 1 Mg(2+) ion per subunit.</text>
</comment>
<comment type="cofactor">
    <cofactor evidence="1">
        <name>Zn(2+)</name>
        <dbReference type="ChEBI" id="CHEBI:29105"/>
    </cofactor>
    <text evidence="1">Binds 1 zinc ion per subunit.</text>
</comment>
<comment type="pathway">
    <text evidence="1">Amino-acid biosynthesis; L-histidine biosynthesis; L-histidine from 5-phospho-alpha-D-ribose 1-diphosphate: step 3/9.</text>
</comment>
<comment type="subunit">
    <text evidence="1">Homodimer.</text>
</comment>
<comment type="subcellular location">
    <subcellularLocation>
        <location evidence="1">Cytoplasm</location>
    </subcellularLocation>
</comment>
<comment type="similarity">
    <text evidence="1">Belongs to the PRA-CH family.</text>
</comment>
<gene>
    <name evidence="1" type="primary">hisI</name>
    <name type="ordered locus">STER_1199</name>
</gene>
<organism>
    <name type="scientific">Streptococcus thermophilus (strain ATCC BAA-491 / LMD-9)</name>
    <dbReference type="NCBI Taxonomy" id="322159"/>
    <lineage>
        <taxon>Bacteria</taxon>
        <taxon>Bacillati</taxon>
        <taxon>Bacillota</taxon>
        <taxon>Bacilli</taxon>
        <taxon>Lactobacillales</taxon>
        <taxon>Streptococcaceae</taxon>
        <taxon>Streptococcus</taxon>
    </lineage>
</organism>